<feature type="chain" id="PRO_1000190550" description="1-(5-phosphoribosyl)-5-[(5-phosphoribosylamino)methylideneamino] imidazole-4-carboxamide isomerase">
    <location>
        <begin position="1"/>
        <end position="245"/>
    </location>
</feature>
<feature type="active site" description="Proton acceptor" evidence="1">
    <location>
        <position position="7"/>
    </location>
</feature>
<feature type="active site" description="Proton donor" evidence="1">
    <location>
        <position position="129"/>
    </location>
</feature>
<comment type="catalytic activity">
    <reaction evidence="1">
        <text>1-(5-phospho-beta-D-ribosyl)-5-[(5-phospho-beta-D-ribosylamino)methylideneamino]imidazole-4-carboxamide = 5-[(5-phospho-1-deoxy-D-ribulos-1-ylimino)methylamino]-1-(5-phospho-beta-D-ribosyl)imidazole-4-carboxamide</text>
        <dbReference type="Rhea" id="RHEA:15469"/>
        <dbReference type="ChEBI" id="CHEBI:58435"/>
        <dbReference type="ChEBI" id="CHEBI:58525"/>
        <dbReference type="EC" id="5.3.1.16"/>
    </reaction>
</comment>
<comment type="pathway">
    <text evidence="1">Amino-acid biosynthesis; L-histidine biosynthesis; L-histidine from 5-phospho-alpha-D-ribose 1-diphosphate: step 4/9.</text>
</comment>
<comment type="subcellular location">
    <subcellularLocation>
        <location evidence="1">Cytoplasm</location>
    </subcellularLocation>
</comment>
<comment type="similarity">
    <text evidence="1">Belongs to the HisA/HisF family.</text>
</comment>
<evidence type="ECO:0000255" key="1">
    <source>
        <dbReference type="HAMAP-Rule" id="MF_01014"/>
    </source>
</evidence>
<accession>B5FM45</accession>
<name>HIS4_SALDC</name>
<dbReference type="EC" id="5.3.1.16" evidence="1"/>
<dbReference type="EMBL" id="CP001144">
    <property type="protein sequence ID" value="ACH74919.1"/>
    <property type="molecule type" value="Genomic_DNA"/>
</dbReference>
<dbReference type="RefSeq" id="WP_000586406.1">
    <property type="nucleotide sequence ID" value="NC_011205.1"/>
</dbReference>
<dbReference type="SMR" id="B5FM45"/>
<dbReference type="KEGG" id="sed:SeD_A2414"/>
<dbReference type="HOGENOM" id="CLU_048577_1_2_6"/>
<dbReference type="UniPathway" id="UPA00031">
    <property type="reaction ID" value="UER00009"/>
</dbReference>
<dbReference type="Proteomes" id="UP000008322">
    <property type="component" value="Chromosome"/>
</dbReference>
<dbReference type="GO" id="GO:0005737">
    <property type="term" value="C:cytoplasm"/>
    <property type="evidence" value="ECO:0007669"/>
    <property type="project" value="UniProtKB-SubCell"/>
</dbReference>
<dbReference type="GO" id="GO:0003949">
    <property type="term" value="F:1-(5-phosphoribosyl)-5-[(5-phosphoribosylamino)methylideneamino]imidazole-4-carboxamide isomerase activity"/>
    <property type="evidence" value="ECO:0007669"/>
    <property type="project" value="UniProtKB-UniRule"/>
</dbReference>
<dbReference type="GO" id="GO:0000105">
    <property type="term" value="P:L-histidine biosynthetic process"/>
    <property type="evidence" value="ECO:0007669"/>
    <property type="project" value="UniProtKB-UniRule"/>
</dbReference>
<dbReference type="GO" id="GO:0000162">
    <property type="term" value="P:L-tryptophan biosynthetic process"/>
    <property type="evidence" value="ECO:0007669"/>
    <property type="project" value="TreeGrafter"/>
</dbReference>
<dbReference type="CDD" id="cd04732">
    <property type="entry name" value="HisA"/>
    <property type="match status" value="1"/>
</dbReference>
<dbReference type="FunFam" id="3.20.20.70:FF:000009">
    <property type="entry name" value="1-(5-phosphoribosyl)-5-[(5-phosphoribosylamino)methylideneamino] imidazole-4-carboxamide isomerase"/>
    <property type="match status" value="1"/>
</dbReference>
<dbReference type="Gene3D" id="3.20.20.70">
    <property type="entry name" value="Aldolase class I"/>
    <property type="match status" value="1"/>
</dbReference>
<dbReference type="HAMAP" id="MF_01014">
    <property type="entry name" value="HisA"/>
    <property type="match status" value="1"/>
</dbReference>
<dbReference type="InterPro" id="IPR013785">
    <property type="entry name" value="Aldolase_TIM"/>
</dbReference>
<dbReference type="InterPro" id="IPR006062">
    <property type="entry name" value="His_biosynth"/>
</dbReference>
<dbReference type="InterPro" id="IPR006063">
    <property type="entry name" value="HisA_bact_arch"/>
</dbReference>
<dbReference type="InterPro" id="IPR044524">
    <property type="entry name" value="Isoase_HisA-like"/>
</dbReference>
<dbReference type="InterPro" id="IPR023016">
    <property type="entry name" value="Isoase_HisA-like_bact"/>
</dbReference>
<dbReference type="InterPro" id="IPR011060">
    <property type="entry name" value="RibuloseP-bd_barrel"/>
</dbReference>
<dbReference type="NCBIfam" id="TIGR00007">
    <property type="entry name" value="1-(5-phosphoribosyl)-5-[(5-phosphoribosylamino)methylideneamino]imidazole-4-carboxamide isomerase"/>
    <property type="match status" value="1"/>
</dbReference>
<dbReference type="PANTHER" id="PTHR43090">
    <property type="entry name" value="1-(5-PHOSPHORIBOSYL)-5-[(5-PHOSPHORIBOSYLAMINO)METHYLIDENEAMINO] IMIDAZOLE-4-CARBOXAMIDE ISOMERASE"/>
    <property type="match status" value="1"/>
</dbReference>
<dbReference type="PANTHER" id="PTHR43090:SF2">
    <property type="entry name" value="1-(5-PHOSPHORIBOSYL)-5-[(5-PHOSPHORIBOSYLAMINO)METHYLIDENEAMINO] IMIDAZOLE-4-CARBOXAMIDE ISOMERASE"/>
    <property type="match status" value="1"/>
</dbReference>
<dbReference type="Pfam" id="PF00977">
    <property type="entry name" value="His_biosynth"/>
    <property type="match status" value="1"/>
</dbReference>
<dbReference type="SUPFAM" id="SSF51366">
    <property type="entry name" value="Ribulose-phoshate binding barrel"/>
    <property type="match status" value="1"/>
</dbReference>
<organism>
    <name type="scientific">Salmonella dublin (strain CT_02021853)</name>
    <dbReference type="NCBI Taxonomy" id="439851"/>
    <lineage>
        <taxon>Bacteria</taxon>
        <taxon>Pseudomonadati</taxon>
        <taxon>Pseudomonadota</taxon>
        <taxon>Gammaproteobacteria</taxon>
        <taxon>Enterobacterales</taxon>
        <taxon>Enterobacteriaceae</taxon>
        <taxon>Salmonella</taxon>
    </lineage>
</organism>
<gene>
    <name evidence="1" type="primary">hisA</name>
    <name type="ordered locus">SeD_A2414</name>
</gene>
<reference key="1">
    <citation type="journal article" date="2011" name="J. Bacteriol.">
        <title>Comparative genomics of 28 Salmonella enterica isolates: evidence for CRISPR-mediated adaptive sublineage evolution.</title>
        <authorList>
            <person name="Fricke W.F."/>
            <person name="Mammel M.K."/>
            <person name="McDermott P.F."/>
            <person name="Tartera C."/>
            <person name="White D.G."/>
            <person name="Leclerc J.E."/>
            <person name="Ravel J."/>
            <person name="Cebula T.A."/>
        </authorList>
    </citation>
    <scope>NUCLEOTIDE SEQUENCE [LARGE SCALE GENOMIC DNA]</scope>
    <source>
        <strain>CT_02021853</strain>
    </source>
</reference>
<proteinExistence type="inferred from homology"/>
<protein>
    <recommendedName>
        <fullName evidence="1">1-(5-phosphoribosyl)-5-[(5-phosphoribosylamino)methylideneamino] imidazole-4-carboxamide isomerase</fullName>
        <ecNumber evidence="1">5.3.1.16</ecNumber>
    </recommendedName>
    <alternativeName>
        <fullName evidence="1">Phosphoribosylformimino-5-aminoimidazole carboxamide ribotide isomerase</fullName>
    </alternativeName>
</protein>
<keyword id="KW-0028">Amino-acid biosynthesis</keyword>
<keyword id="KW-0963">Cytoplasm</keyword>
<keyword id="KW-0368">Histidine biosynthesis</keyword>
<keyword id="KW-0413">Isomerase</keyword>
<sequence length="245" mass="26102">MIIPALDLIDGTVVRLHQGDYARQRDYGNDPLPRLQDYAAQGAGVLHLVDLTGAKDPAKRQIPLIKTLVAGVNVPVQVGGGVRTEEDVAALLKAGVARVVIGSTAVKSPDVVKGWFERFGAQALVLALDVRIDEHGNKQVAVSGWQENSGVSLEQLVETYLPVGLKHVLCTDISRDGTLAGSNVSLYEEVCARYPQIAFQSSGGIGDIDDIAALRGTGVRGVIVGRALLEGKFTVKEAIQCWQNV</sequence>